<feature type="chain" id="PRO_0000097450" description="RNA polymerase I-specific transcription initiation factor RRN7">
    <location>
        <begin position="1"/>
        <end position="514"/>
    </location>
</feature>
<feature type="zinc finger region" description="RRN7-type">
    <location>
        <begin position="3"/>
        <end position="36"/>
    </location>
</feature>
<feature type="region of interest" description="B-reader">
    <location>
        <begin position="37"/>
        <end position="66"/>
    </location>
</feature>
<feature type="region of interest" description="B-linker">
    <location>
        <begin position="67"/>
        <end position="101"/>
    </location>
</feature>
<feature type="region of interest" description="N-terminal cyclin fold">
    <location>
        <begin position="102"/>
        <end position="210"/>
    </location>
</feature>
<feature type="region of interest" description="C-terminal cyclin fold">
    <location>
        <begin position="211"/>
        <end position="320"/>
    </location>
</feature>
<feature type="binding site" evidence="9">
    <location>
        <position position="10"/>
    </location>
    <ligand>
        <name>Zn(2+)</name>
        <dbReference type="ChEBI" id="CHEBI:29105"/>
    </ligand>
</feature>
<feature type="binding site" evidence="9">
    <location>
        <position position="15"/>
    </location>
    <ligand>
        <name>Zn(2+)</name>
        <dbReference type="ChEBI" id="CHEBI:29105"/>
    </ligand>
</feature>
<feature type="binding site" evidence="9">
    <location>
        <position position="29"/>
    </location>
    <ligand>
        <name>Zn(2+)</name>
        <dbReference type="ChEBI" id="CHEBI:29105"/>
    </ligand>
</feature>
<feature type="binding site" evidence="9">
    <location>
        <position position="33"/>
    </location>
    <ligand>
        <name>Zn(2+)</name>
        <dbReference type="ChEBI" id="CHEBI:29105"/>
    </ligand>
</feature>
<feature type="mutagenesis site" description="Impaired binding to Pol I." evidence="3">
    <original>C</original>
    <variation>A</variation>
    <location>
        <position position="29"/>
    </location>
</feature>
<feature type="mutagenesis site" description="Impaired binding to Pol I." evidence="3">
    <original>H</original>
    <variation>S</variation>
    <location>
        <position position="33"/>
    </location>
</feature>
<feature type="turn" evidence="13">
    <location>
        <begin position="12"/>
        <end position="14"/>
    </location>
</feature>
<feature type="strand" evidence="13">
    <location>
        <begin position="20"/>
        <end position="25"/>
    </location>
</feature>
<feature type="strand" evidence="12">
    <location>
        <begin position="27"/>
        <end position="29"/>
    </location>
</feature>
<feature type="strand" evidence="13">
    <location>
        <begin position="30"/>
        <end position="32"/>
    </location>
</feature>
<feature type="strand" evidence="10">
    <location>
        <begin position="33"/>
        <end position="35"/>
    </location>
</feature>
<feature type="strand" evidence="13">
    <location>
        <begin position="66"/>
        <end position="73"/>
    </location>
</feature>
<feature type="strand" evidence="13">
    <location>
        <begin position="76"/>
        <end position="78"/>
    </location>
</feature>
<feature type="turn" evidence="13">
    <location>
        <begin position="80"/>
        <end position="82"/>
    </location>
</feature>
<feature type="helix" evidence="13">
    <location>
        <begin position="85"/>
        <end position="89"/>
    </location>
</feature>
<feature type="helix" evidence="13">
    <location>
        <begin position="99"/>
        <end position="121"/>
    </location>
</feature>
<feature type="helix" evidence="13">
    <location>
        <begin position="128"/>
        <end position="145"/>
    </location>
</feature>
<feature type="helix" evidence="13">
    <location>
        <begin position="160"/>
        <end position="171"/>
    </location>
</feature>
<feature type="helix" evidence="13">
    <location>
        <begin position="178"/>
        <end position="183"/>
    </location>
</feature>
<feature type="turn" evidence="13">
    <location>
        <begin position="184"/>
        <end position="188"/>
    </location>
</feature>
<feature type="strand" evidence="10">
    <location>
        <begin position="189"/>
        <end position="191"/>
    </location>
</feature>
<feature type="turn" evidence="13">
    <location>
        <begin position="194"/>
        <end position="198"/>
    </location>
</feature>
<feature type="strand" evidence="13">
    <location>
        <begin position="199"/>
        <end position="202"/>
    </location>
</feature>
<feature type="turn" evidence="13">
    <location>
        <begin position="203"/>
        <end position="206"/>
    </location>
</feature>
<feature type="helix" evidence="13">
    <location>
        <begin position="209"/>
        <end position="213"/>
    </location>
</feature>
<feature type="turn" evidence="11">
    <location>
        <begin position="222"/>
        <end position="224"/>
    </location>
</feature>
<feature type="helix" evidence="13">
    <location>
        <begin position="225"/>
        <end position="236"/>
    </location>
</feature>
<feature type="turn" evidence="13">
    <location>
        <begin position="240"/>
        <end position="242"/>
    </location>
</feature>
<feature type="helix" evidence="13">
    <location>
        <begin position="249"/>
        <end position="260"/>
    </location>
</feature>
<feature type="helix" evidence="13">
    <location>
        <begin position="265"/>
        <end position="276"/>
    </location>
</feature>
<feature type="strand" evidence="13">
    <location>
        <begin position="281"/>
        <end position="283"/>
    </location>
</feature>
<feature type="strand" evidence="11">
    <location>
        <begin position="289"/>
        <end position="291"/>
    </location>
</feature>
<feature type="strand" evidence="10">
    <location>
        <begin position="294"/>
        <end position="297"/>
    </location>
</feature>
<feature type="helix" evidence="13">
    <location>
        <begin position="302"/>
        <end position="319"/>
    </location>
</feature>
<feature type="helix" evidence="13">
    <location>
        <begin position="328"/>
        <end position="338"/>
    </location>
</feature>
<feature type="helix" evidence="13">
    <location>
        <begin position="347"/>
        <end position="356"/>
    </location>
</feature>
<feature type="strand" evidence="13">
    <location>
        <begin position="359"/>
        <end position="361"/>
    </location>
</feature>
<feature type="helix" evidence="13">
    <location>
        <begin position="365"/>
        <end position="368"/>
    </location>
</feature>
<feature type="helix" evidence="13">
    <location>
        <begin position="371"/>
        <end position="385"/>
    </location>
</feature>
<feature type="helix" evidence="13">
    <location>
        <begin position="407"/>
        <end position="416"/>
    </location>
</feature>
<feature type="strand" evidence="12">
    <location>
        <begin position="422"/>
        <end position="424"/>
    </location>
</feature>
<feature type="strand" evidence="13">
    <location>
        <begin position="426"/>
        <end position="429"/>
    </location>
</feature>
<feature type="helix" evidence="13">
    <location>
        <begin position="438"/>
        <end position="448"/>
    </location>
</feature>
<feature type="turn" evidence="13">
    <location>
        <begin position="470"/>
        <end position="476"/>
    </location>
</feature>
<feature type="helix" evidence="13">
    <location>
        <begin position="477"/>
        <end position="489"/>
    </location>
</feature>
<feature type="turn" evidence="13">
    <location>
        <begin position="490"/>
        <end position="492"/>
    </location>
</feature>
<feature type="helix" evidence="13">
    <location>
        <begin position="495"/>
        <end position="513"/>
    </location>
</feature>
<keyword id="KW-0002">3D-structure</keyword>
<keyword id="KW-0238">DNA-binding</keyword>
<keyword id="KW-0479">Metal-binding</keyword>
<keyword id="KW-0539">Nucleus</keyword>
<keyword id="KW-1185">Reference proteome</keyword>
<keyword id="KW-0804">Transcription</keyword>
<keyword id="KW-0805">Transcription regulation</keyword>
<keyword id="KW-0862">Zinc</keyword>
<keyword id="KW-0863">Zinc-finger</keyword>
<sequence>MSTFIRGPICGTDNCPSRLWRIIDGRRTCQYGHVMEGDVEFNDDEDDLNGLGAGVITRRLNLTTNATGSFQSSQLTNSQLLQQQQRQSHKKFKKLIGHEAKLLFLKSFQFILKRQIRWLITEMRFPKEFEHVAKIIWLKILKTINDQPQEELKLQLHMTSTISILYLASTHLSLPVYTCDYIKWICTAKMPYFQASEILPKSWRIQLPNYYVSILEGSISPFNGQLYNKIALTCGMIHFKEFFNSEISCQGLLLKLVMQCALPPEFYFYTKQVIEFEETDIRNLTLWERTDERHTGRVSNHAELRVLSYFMLTINWMLSFDRDRQYPLKWILSLTESLTQRTTTSESIGRNIVKVVYPDKPTSSDYFQWSEEETLEFLKWMEKQFLPTQTKSLHNENGSMEMTIDQKIARRKLYKIFPLDREANHDGEFNDSTHQLTFIEDLQERYAKQTPFFESNKIRDSLNYQEANPPARKEAIGRLLTHIASQLLVDFAISKEQLKDCISRIKNACLHRMN</sequence>
<accession>P40992</accession>
<accession>D6VWF7</accession>
<protein>
    <recommendedName>
        <fullName>RNA polymerase I-specific transcription initiation factor RRN7</fullName>
    </recommendedName>
</protein>
<dbReference type="EMBL" id="L33864">
    <property type="protein sequence ID" value="AAA53131.1"/>
    <property type="molecule type" value="Genomic_DNA"/>
</dbReference>
<dbReference type="EMBL" id="Z49300">
    <property type="protein sequence ID" value="CAA89316.1"/>
    <property type="molecule type" value="Genomic_DNA"/>
</dbReference>
<dbReference type="EMBL" id="AY692999">
    <property type="protein sequence ID" value="AAT93018.1"/>
    <property type="molecule type" value="Genomic_DNA"/>
</dbReference>
<dbReference type="EMBL" id="BK006943">
    <property type="protein sequence ID" value="DAA08773.1"/>
    <property type="molecule type" value="Genomic_DNA"/>
</dbReference>
<dbReference type="PIR" id="S50785">
    <property type="entry name" value="S50785"/>
</dbReference>
<dbReference type="RefSeq" id="NP_012509.1">
    <property type="nucleotide sequence ID" value="NM_001181459.1"/>
</dbReference>
<dbReference type="PDB" id="5N5Y">
    <property type="method" value="EM"/>
    <property type="resolution" value="7.70 A"/>
    <property type="chains" value="Q=1-514"/>
</dbReference>
<dbReference type="PDB" id="5N5Z">
    <property type="method" value="EM"/>
    <property type="resolution" value="7.70 A"/>
    <property type="chains" value="Q=1-514"/>
</dbReference>
<dbReference type="PDB" id="5N60">
    <property type="method" value="EM"/>
    <property type="resolution" value="7.70 A"/>
    <property type="chains" value="Q=1-514"/>
</dbReference>
<dbReference type="PDB" id="5N61">
    <property type="method" value="EM"/>
    <property type="resolution" value="3.40 A"/>
    <property type="chains" value="Q=1-514"/>
</dbReference>
<dbReference type="PDB" id="5O7X">
    <property type="method" value="X-ray"/>
    <property type="resolution" value="3.20 A"/>
    <property type="chains" value="B/E/H/K/N/Q=1-514"/>
</dbReference>
<dbReference type="PDB" id="5OA1">
    <property type="method" value="EM"/>
    <property type="resolution" value="4.40 A"/>
    <property type="chains" value="U=1-514"/>
</dbReference>
<dbReference type="PDB" id="5W5Y">
    <property type="method" value="EM"/>
    <property type="resolution" value="3.80 A"/>
    <property type="chains" value="P=1-514"/>
</dbReference>
<dbReference type="PDB" id="5W64">
    <property type="method" value="EM"/>
    <property type="resolution" value="4.20 A"/>
    <property type="chains" value="P=1-514"/>
</dbReference>
<dbReference type="PDB" id="5W65">
    <property type="method" value="EM"/>
    <property type="resolution" value="4.30 A"/>
    <property type="chains" value="P=1-514"/>
</dbReference>
<dbReference type="PDB" id="5W66">
    <property type="method" value="EM"/>
    <property type="resolution" value="3.90 A"/>
    <property type="chains" value="P=1-514"/>
</dbReference>
<dbReference type="PDB" id="6RQH">
    <property type="method" value="EM"/>
    <property type="resolution" value="3.70 A"/>
    <property type="chains" value="Q=1-514"/>
</dbReference>
<dbReference type="PDB" id="6RQL">
    <property type="method" value="EM"/>
    <property type="resolution" value="2.90 A"/>
    <property type="chains" value="Q=1-514"/>
</dbReference>
<dbReference type="PDB" id="6RRD">
    <property type="method" value="EM"/>
    <property type="resolution" value="3.10 A"/>
    <property type="chains" value="Q=1-514"/>
</dbReference>
<dbReference type="PDB" id="6RUI">
    <property type="method" value="EM"/>
    <property type="resolution" value="2.70 A"/>
    <property type="chains" value="Q=1-514"/>
</dbReference>
<dbReference type="PDB" id="6RUO">
    <property type="method" value="EM"/>
    <property type="resolution" value="3.50 A"/>
    <property type="chains" value="Q=1-514"/>
</dbReference>
<dbReference type="PDB" id="6RWE">
    <property type="method" value="EM"/>
    <property type="resolution" value="3.00 A"/>
    <property type="chains" value="Q=1-514"/>
</dbReference>
<dbReference type="PDB" id="6TPS">
    <property type="method" value="EM"/>
    <property type="resolution" value="3.54 A"/>
    <property type="chains" value="Q=1-514"/>
</dbReference>
<dbReference type="PDBsum" id="5N5Y"/>
<dbReference type="PDBsum" id="5N5Z"/>
<dbReference type="PDBsum" id="5N60"/>
<dbReference type="PDBsum" id="5N61"/>
<dbReference type="PDBsum" id="5O7X"/>
<dbReference type="PDBsum" id="5OA1"/>
<dbReference type="PDBsum" id="5W5Y"/>
<dbReference type="PDBsum" id="5W64"/>
<dbReference type="PDBsum" id="5W65"/>
<dbReference type="PDBsum" id="5W66"/>
<dbReference type="PDBsum" id="6RQH"/>
<dbReference type="PDBsum" id="6RQL"/>
<dbReference type="PDBsum" id="6RRD"/>
<dbReference type="PDBsum" id="6RUI"/>
<dbReference type="PDBsum" id="6RUO"/>
<dbReference type="PDBsum" id="6RWE"/>
<dbReference type="PDBsum" id="6TPS"/>
<dbReference type="EMDB" id="EMD-10006"/>
<dbReference type="EMDB" id="EMD-10007"/>
<dbReference type="EMDB" id="EMD-10038"/>
<dbReference type="EMDB" id="EMD-10544"/>
<dbReference type="EMDB" id="EMD-3590"/>
<dbReference type="EMDB" id="EMD-3591"/>
<dbReference type="EMDB" id="EMD-3592"/>
<dbReference type="EMDB" id="EMD-3593"/>
<dbReference type="EMDB" id="EMD-3727"/>
<dbReference type="EMDB" id="EMD-4982"/>
<dbReference type="EMDB" id="EMD-4984"/>
<dbReference type="EMDB" id="EMD-4987"/>
<dbReference type="EMDB" id="EMD-8771"/>
<dbReference type="EMDB" id="EMD-8772"/>
<dbReference type="EMDB" id="EMD-8774"/>
<dbReference type="EMDB" id="EMD-8775"/>
<dbReference type="EMDB" id="EMD-8776"/>
<dbReference type="EMDB" id="EMD-8777"/>
<dbReference type="SMR" id="P40992"/>
<dbReference type="BioGRID" id="33734">
    <property type="interactions" value="161"/>
</dbReference>
<dbReference type="ComplexPortal" id="CPX-1836">
    <property type="entry name" value="RNA polymerase I core factor complex"/>
</dbReference>
<dbReference type="DIP" id="DIP-1594N"/>
<dbReference type="FunCoup" id="P40992">
    <property type="interactions" value="69"/>
</dbReference>
<dbReference type="IntAct" id="P40992">
    <property type="interactions" value="14"/>
</dbReference>
<dbReference type="MINT" id="P40992"/>
<dbReference type="STRING" id="4932.YJL025W"/>
<dbReference type="PaxDb" id="4932-YJL025W"/>
<dbReference type="PeptideAtlas" id="P40992"/>
<dbReference type="TopDownProteomics" id="P40992"/>
<dbReference type="EnsemblFungi" id="YJL025W_mRNA">
    <property type="protein sequence ID" value="YJL025W"/>
    <property type="gene ID" value="YJL025W"/>
</dbReference>
<dbReference type="GeneID" id="853428"/>
<dbReference type="KEGG" id="sce:YJL025W"/>
<dbReference type="AGR" id="SGD:S000003562"/>
<dbReference type="SGD" id="S000003562">
    <property type="gene designation" value="RRN7"/>
</dbReference>
<dbReference type="VEuPathDB" id="FungiDB:YJL025W"/>
<dbReference type="eggNOG" id="ENOG502RYCI">
    <property type="taxonomic scope" value="Eukaryota"/>
</dbReference>
<dbReference type="HOGENOM" id="CLU_016553_3_1_1"/>
<dbReference type="InParanoid" id="P40992"/>
<dbReference type="OMA" id="TICQFGH"/>
<dbReference type="OrthoDB" id="428577at2759"/>
<dbReference type="BioCyc" id="YEAST:G3O-31495-MONOMER"/>
<dbReference type="Reactome" id="R-SCE-73772">
    <property type="pathway name" value="RNA Polymerase I Promoter Escape"/>
</dbReference>
<dbReference type="BioGRID-ORCS" id="853428">
    <property type="hits" value="6 hits in 10 CRISPR screens"/>
</dbReference>
<dbReference type="PRO" id="PR:P40992"/>
<dbReference type="Proteomes" id="UP000002311">
    <property type="component" value="Chromosome X"/>
</dbReference>
<dbReference type="RNAct" id="P40992">
    <property type="molecule type" value="protein"/>
</dbReference>
<dbReference type="GO" id="GO:0005730">
    <property type="term" value="C:nucleolus"/>
    <property type="evidence" value="ECO:0000314"/>
    <property type="project" value="SGD"/>
</dbReference>
<dbReference type="GO" id="GO:0005634">
    <property type="term" value="C:nucleus"/>
    <property type="evidence" value="ECO:0000303"/>
    <property type="project" value="ComplexPortal"/>
</dbReference>
<dbReference type="GO" id="GO:0070860">
    <property type="term" value="C:RNA polymerase I core factor complex"/>
    <property type="evidence" value="ECO:0000314"/>
    <property type="project" value="UniProtKB"/>
</dbReference>
<dbReference type="GO" id="GO:0001164">
    <property type="term" value="F:RNA polymerase I core promoter sequence-specific DNA binding"/>
    <property type="evidence" value="ECO:0000314"/>
    <property type="project" value="UniProtKB"/>
</dbReference>
<dbReference type="GO" id="GO:0017025">
    <property type="term" value="F:TBP-class protein binding"/>
    <property type="evidence" value="ECO:0000314"/>
    <property type="project" value="SGD"/>
</dbReference>
<dbReference type="GO" id="GO:0008270">
    <property type="term" value="F:zinc ion binding"/>
    <property type="evidence" value="ECO:0007669"/>
    <property type="project" value="UniProtKB-KW"/>
</dbReference>
<dbReference type="GO" id="GO:0042790">
    <property type="term" value="P:nucleolar large rRNA transcription by RNA polymerase I"/>
    <property type="evidence" value="ECO:0000314"/>
    <property type="project" value="ComplexPortal"/>
</dbReference>
<dbReference type="InterPro" id="IPR048538">
    <property type="entry name" value="Rrn7_cyclin_C"/>
</dbReference>
<dbReference type="InterPro" id="IPR048540">
    <property type="entry name" value="Rrn7_cyclin_N"/>
</dbReference>
<dbReference type="InterPro" id="IPR033599">
    <property type="entry name" value="TAF1B/Rrn7"/>
</dbReference>
<dbReference type="InterPro" id="IPR021752">
    <property type="entry name" value="TF_Rrn7_Zf"/>
</dbReference>
<dbReference type="PANTHER" id="PTHR31576">
    <property type="entry name" value="TATA BOX-BINDING PROTEIN-ASSOCIATED FACTOR RNA POLYMERASE I SUBUNIT B"/>
    <property type="match status" value="1"/>
</dbReference>
<dbReference type="PANTHER" id="PTHR31576:SF2">
    <property type="entry name" value="TATA BOX-BINDING PROTEIN-ASSOCIATED FACTOR RNA POLYMERASE I SUBUNIT B"/>
    <property type="match status" value="1"/>
</dbReference>
<dbReference type="Pfam" id="PF20645">
    <property type="entry name" value="Rrn7_cyclin_C"/>
    <property type="match status" value="1"/>
</dbReference>
<dbReference type="Pfam" id="PF20644">
    <property type="entry name" value="Rrn7_cyclin_N"/>
    <property type="match status" value="1"/>
</dbReference>
<dbReference type="Pfam" id="PF11781">
    <property type="entry name" value="Zn_ribbon_RRN7"/>
    <property type="match status" value="1"/>
</dbReference>
<evidence type="ECO:0000269" key="1">
    <source>
    </source>
</evidence>
<evidence type="ECO:0000269" key="2">
    <source>
    </source>
</evidence>
<evidence type="ECO:0000269" key="3">
    <source>
    </source>
</evidence>
<evidence type="ECO:0000269" key="4">
    <source>
    </source>
</evidence>
<evidence type="ECO:0000269" key="5">
    <source>
    </source>
</evidence>
<evidence type="ECO:0000269" key="6">
    <source>
    </source>
</evidence>
<evidence type="ECO:0000269" key="7">
    <source>
    </source>
</evidence>
<evidence type="ECO:0000269" key="8">
    <source>
    </source>
</evidence>
<evidence type="ECO:0000305" key="9"/>
<evidence type="ECO:0007829" key="10">
    <source>
        <dbReference type="PDB" id="5N61"/>
    </source>
</evidence>
<evidence type="ECO:0007829" key="11">
    <source>
        <dbReference type="PDB" id="5O7X"/>
    </source>
</evidence>
<evidence type="ECO:0007829" key="12">
    <source>
        <dbReference type="PDB" id="6RQL"/>
    </source>
</evidence>
<evidence type="ECO:0007829" key="13">
    <source>
        <dbReference type="PDB" id="6RUI"/>
    </source>
</evidence>
<name>RRN7_YEAST</name>
<organism>
    <name type="scientific">Saccharomyces cerevisiae (strain ATCC 204508 / S288c)</name>
    <name type="common">Baker's yeast</name>
    <dbReference type="NCBI Taxonomy" id="559292"/>
    <lineage>
        <taxon>Eukaryota</taxon>
        <taxon>Fungi</taxon>
        <taxon>Dikarya</taxon>
        <taxon>Ascomycota</taxon>
        <taxon>Saccharomycotina</taxon>
        <taxon>Saccharomycetes</taxon>
        <taxon>Saccharomycetales</taxon>
        <taxon>Saccharomycetaceae</taxon>
        <taxon>Saccharomyces</taxon>
    </lineage>
</organism>
<gene>
    <name type="primary">RRN7</name>
    <name type="ordered locus">YJL025W</name>
    <name type="ORF">J1273</name>
</gene>
<comment type="function">
    <text evidence="3 4 7">Component of RNA polymerase I core factor complex (CF) that acts as a SUA7/TFIIB-like factor and plays a key role in multiple steps during transcription initiation such as pre-initiation complex (PIC) assembly and postpolymerase recruitment events in polymerase I (Pol I) transcription. Binds rDNA promoters and plays a role in Pol I recruitment. After binding of UAF (upstream activation factor) to an upstream element of the promoter, CF is recruited in a SPT15/TBP-dependent manner to form a pre-initiation complex.</text>
</comment>
<comment type="subunit">
    <text evidence="5 6 8">Component of the core factor (CF) complex, which consists of RRN6, RRN7 and RRN11. The CF heterotrimer may further dimerize to form a hexamer. RRN7 interacts with RRN6, RRN11, SPT15 and RRN9.</text>
</comment>
<comment type="interaction">
    <interactant intactId="EBI-15990">
        <id>P40992</id>
    </interactant>
    <interactant intactId="EBI-27790">
        <id>Q04712</id>
        <label>RRN11</label>
    </interactant>
    <organismsDiffer>false</organismsDiffer>
    <experiments>3</experiments>
</comment>
<comment type="interaction">
    <interactant intactId="EBI-15990">
        <id>P40992</id>
    </interactant>
    <interactant intactId="EBI-15986">
        <id>P32786</id>
        <label>RRN6</label>
    </interactant>
    <organismsDiffer>false</organismsDiffer>
    <experiments>5</experiments>
</comment>
<comment type="subcellular location">
    <subcellularLocation>
        <location evidence="1">Nucleus</location>
        <location evidence="1">Nucleolus</location>
    </subcellularLocation>
</comment>
<comment type="domain">
    <text evidence="3">Although it shares weak sequence similarity with SUA7/TFIIB, displays a similar subdomain organization as SUA7/TFIIB, with a N-terminal zinc finger, a connecting region (composed of B-reader and B-linker regions), followed by 2 cyclin folds.</text>
</comment>
<comment type="miscellaneous">
    <text evidence="2">Present with 398 molecules/cell in log phase SD medium.</text>
</comment>
<comment type="similarity">
    <text evidence="9">Belongs to the RRN7/TAF1B family.</text>
</comment>
<proteinExistence type="evidence at protein level"/>
<reference key="1">
    <citation type="journal article" date="1994" name="Genes Dev.">
        <title>RRN6 and RRN7 encode subunits of a multiprotein complex essential for the initiation of rDNA transcription by RNA polymerase I in Saccharomyces cerevisiae.</title>
        <authorList>
            <person name="Keys D.A."/>
            <person name="Vu L."/>
            <person name="Steffan J.S."/>
            <person name="Dodd J.A."/>
            <person name="Yamamoto R.T."/>
            <person name="Nogi Y."/>
            <person name="Nomura M."/>
        </authorList>
    </citation>
    <scope>NUCLEOTIDE SEQUENCE [GENOMIC DNA]</scope>
    <scope>IDENTIFICATION IN THE CF COMPLEX</scope>
</reference>
<reference key="2">
    <citation type="journal article" date="1996" name="EMBO J.">
        <title>Complete nucleotide sequence of Saccharomyces cerevisiae chromosome X.</title>
        <authorList>
            <person name="Galibert F."/>
            <person name="Alexandraki D."/>
            <person name="Baur A."/>
            <person name="Boles E."/>
            <person name="Chalwatzis N."/>
            <person name="Chuat J.-C."/>
            <person name="Coster F."/>
            <person name="Cziepluch C."/>
            <person name="de Haan M."/>
            <person name="Domdey H."/>
            <person name="Durand P."/>
            <person name="Entian K.-D."/>
            <person name="Gatius M."/>
            <person name="Goffeau A."/>
            <person name="Grivell L.A."/>
            <person name="Hennemann A."/>
            <person name="Herbert C.J."/>
            <person name="Heumann K."/>
            <person name="Hilger F."/>
            <person name="Hollenberg C.P."/>
            <person name="Huang M.-E."/>
            <person name="Jacq C."/>
            <person name="Jauniaux J.-C."/>
            <person name="Katsoulou C."/>
            <person name="Kirchrath L."/>
            <person name="Kleine K."/>
            <person name="Kordes E."/>
            <person name="Koetter P."/>
            <person name="Liebl S."/>
            <person name="Louis E.J."/>
            <person name="Manus V."/>
            <person name="Mewes H.-W."/>
            <person name="Miosga T."/>
            <person name="Obermaier B."/>
            <person name="Perea J."/>
            <person name="Pohl T.M."/>
            <person name="Portetelle D."/>
            <person name="Pujol A."/>
            <person name="Purnelle B."/>
            <person name="Ramezani Rad M."/>
            <person name="Rasmussen S.W."/>
            <person name="Rose M."/>
            <person name="Rossau R."/>
            <person name="Schaaff-Gerstenschlaeger I."/>
            <person name="Smits P.H.M."/>
            <person name="Scarcez T."/>
            <person name="Soriano N."/>
            <person name="To Van D."/>
            <person name="Tzermia M."/>
            <person name="Van Broekhoven A."/>
            <person name="Vandenbol M."/>
            <person name="Wedler H."/>
            <person name="von Wettstein D."/>
            <person name="Wambutt R."/>
            <person name="Zagulski M."/>
            <person name="Zollner A."/>
            <person name="Karpfinger-Hartl L."/>
        </authorList>
    </citation>
    <scope>NUCLEOTIDE SEQUENCE [LARGE SCALE GENOMIC DNA]</scope>
    <source>
        <strain>ATCC 204508 / S288c</strain>
    </source>
</reference>
<reference key="3">
    <citation type="journal article" date="2014" name="G3 (Bethesda)">
        <title>The reference genome sequence of Saccharomyces cerevisiae: Then and now.</title>
        <authorList>
            <person name="Engel S.R."/>
            <person name="Dietrich F.S."/>
            <person name="Fisk D.G."/>
            <person name="Binkley G."/>
            <person name="Balakrishnan R."/>
            <person name="Costanzo M.C."/>
            <person name="Dwight S.S."/>
            <person name="Hitz B.C."/>
            <person name="Karra K."/>
            <person name="Nash R.S."/>
            <person name="Weng S."/>
            <person name="Wong E.D."/>
            <person name="Lloyd P."/>
            <person name="Skrzypek M.S."/>
            <person name="Miyasato S.R."/>
            <person name="Simison M."/>
            <person name="Cherry J.M."/>
        </authorList>
    </citation>
    <scope>GENOME REANNOTATION</scope>
    <source>
        <strain>ATCC 204508 / S288c</strain>
    </source>
</reference>
<reference key="4">
    <citation type="journal article" date="2007" name="Genome Res.">
        <title>Approaching a complete repository of sequence-verified protein-encoding clones for Saccharomyces cerevisiae.</title>
        <authorList>
            <person name="Hu Y."/>
            <person name="Rolfs A."/>
            <person name="Bhullar B."/>
            <person name="Murthy T.V.S."/>
            <person name="Zhu C."/>
            <person name="Berger M.F."/>
            <person name="Camargo A.A."/>
            <person name="Kelley F."/>
            <person name="McCarron S."/>
            <person name="Jepson D."/>
            <person name="Richardson A."/>
            <person name="Raphael J."/>
            <person name="Moreira D."/>
            <person name="Taycher E."/>
            <person name="Zuo D."/>
            <person name="Mohr S."/>
            <person name="Kane M.F."/>
            <person name="Williamson J."/>
            <person name="Simpson A.J.G."/>
            <person name="Bulyk M.L."/>
            <person name="Harlow E."/>
            <person name="Marsischky G."/>
            <person name="Kolodner R.D."/>
            <person name="LaBaer J."/>
        </authorList>
    </citation>
    <scope>NUCLEOTIDE SEQUENCE [GENOMIC DNA]</scope>
    <source>
        <strain>ATCC 204508 / S288c</strain>
    </source>
</reference>
<reference key="5">
    <citation type="journal article" date="1996" name="Genes Dev.">
        <title>The role of TBP in rDNA transcription by RNA polymerase I in Saccharomyces cerevisiae: TBP is required for upstream activation factor-dependent recruitment of core factor.</title>
        <authorList>
            <person name="Steffan J.S."/>
            <person name="Keys D.A."/>
            <person name="Dodd J.A."/>
            <person name="Nomura M."/>
        </authorList>
    </citation>
    <scope>INTERACTION WITH RRN9</scope>
</reference>
<reference key="6">
    <citation type="journal article" date="1996" name="J. Biol. Chem.">
        <title>RRN11 encodes the third subunit of the complex containing Rrn6p and Rrn7p that is essential for the initiation of rDNA transcription by yeast RNA polymerase I.</title>
        <authorList>
            <person name="Lalo D."/>
            <person name="Steffan J.S."/>
            <person name="Dodd J.A."/>
            <person name="Nomura M."/>
        </authorList>
    </citation>
    <scope>INTERACTION WITH RRN6; RRN11 AND SPT15</scope>
</reference>
<reference key="7">
    <citation type="journal article" date="1996" name="Mol. Cell. Biol.">
        <title>A novel 66-kilodalton protein complexes with Rrn6, Rrn7, and TATA-binding protein to promote polymerase I transcription initiation in Saccharomyces cerevisiae.</title>
        <authorList>
            <person name="Lin C.W."/>
            <person name="Moorefield B."/>
            <person name="Payne J."/>
            <person name="Aprikian P."/>
            <person name="Mitomo K."/>
            <person name="Reeder R.H."/>
        </authorList>
    </citation>
    <scope>FUNCTION OF THE CF COMPLEX</scope>
</reference>
<reference key="8">
    <citation type="journal article" date="2003" name="Nature">
        <title>Global analysis of protein localization in budding yeast.</title>
        <authorList>
            <person name="Huh W.-K."/>
            <person name="Falvo J.V."/>
            <person name="Gerke L.C."/>
            <person name="Carroll A.S."/>
            <person name="Howson R.W."/>
            <person name="Weissman J.S."/>
            <person name="O'Shea E.K."/>
        </authorList>
    </citation>
    <scope>SUBCELLULAR LOCATION [LARGE SCALE ANALYSIS]</scope>
</reference>
<reference key="9">
    <citation type="journal article" date="2003" name="Nature">
        <title>Global analysis of protein expression in yeast.</title>
        <authorList>
            <person name="Ghaemmaghami S."/>
            <person name="Huh W.-K."/>
            <person name="Bower K."/>
            <person name="Howson R.W."/>
            <person name="Belle A."/>
            <person name="Dephoure N."/>
            <person name="O'Shea E.K."/>
            <person name="Weissman J.S."/>
        </authorList>
    </citation>
    <scope>LEVEL OF PROTEIN EXPRESSION [LARGE SCALE ANALYSIS]</scope>
</reference>
<reference key="10">
    <citation type="journal article" date="2011" name="Genes Dev.">
        <title>Molecular basis of Rrn3-regulated RNA polymerase I initiation and cell growth.</title>
        <authorList>
            <person name="Blattner C."/>
            <person name="Jennebach S."/>
            <person name="Herzog F."/>
            <person name="Mayer A."/>
            <person name="Cheung A.C."/>
            <person name="Witte G."/>
            <person name="Lorenzen K."/>
            <person name="Hopfner K.P."/>
            <person name="Heck A.J."/>
            <person name="Aebersold R."/>
            <person name="Cramer P."/>
        </authorList>
    </citation>
    <scope>FUNCTION</scope>
</reference>
<reference key="11">
    <citation type="journal article" date="2011" name="Science">
        <title>Yeast Rrn7 and human TAF1B are TFIIB-related RNA polymerase I general transcription factors.</title>
        <authorList>
            <person name="Knutson B.A."/>
            <person name="Hahn S."/>
        </authorList>
    </citation>
    <scope>FUNCTION</scope>
    <scope>MUTAGENESIS OF CYS-29 AND HIS-33</scope>
</reference>